<organism>
    <name type="scientific">Rattus norvegicus</name>
    <name type="common">Rat</name>
    <dbReference type="NCBI Taxonomy" id="10116"/>
    <lineage>
        <taxon>Eukaryota</taxon>
        <taxon>Metazoa</taxon>
        <taxon>Chordata</taxon>
        <taxon>Craniata</taxon>
        <taxon>Vertebrata</taxon>
        <taxon>Euteleostomi</taxon>
        <taxon>Mammalia</taxon>
        <taxon>Eutheria</taxon>
        <taxon>Euarchontoglires</taxon>
        <taxon>Glires</taxon>
        <taxon>Rodentia</taxon>
        <taxon>Myomorpha</taxon>
        <taxon>Muroidea</taxon>
        <taxon>Muridae</taxon>
        <taxon>Murinae</taxon>
        <taxon>Rattus</taxon>
    </lineage>
</organism>
<reference key="1">
    <citation type="journal article" date="2006" name="Gene">
        <title>Characterization of kynurenine aminotransferase III, a novel member of a phylogenetically conserved KAT family.</title>
        <authorList>
            <person name="Yu P."/>
            <person name="Li Z."/>
            <person name="Zhang L."/>
            <person name="Tagle D.A."/>
            <person name="Cai T."/>
        </authorList>
    </citation>
    <scope>NUCLEOTIDE SEQUENCE [MRNA]</scope>
</reference>
<feature type="chain" id="PRO_0000287706" description="Kynurenine--oxoglutarate transaminase 3">
    <location>
        <begin position="1"/>
        <end position="454"/>
    </location>
</feature>
<feature type="binding site" evidence="1">
    <location>
        <position position="71"/>
    </location>
    <ligand>
        <name>substrate</name>
    </ligand>
</feature>
<feature type="binding site" evidence="1">
    <location>
        <position position="218"/>
    </location>
    <ligand>
        <name>substrate</name>
    </ligand>
</feature>
<feature type="binding site" evidence="1">
    <location>
        <position position="429"/>
    </location>
    <ligand>
        <name>substrate</name>
    </ligand>
</feature>
<feature type="modified residue" description="N6-acetyllysine; alternate" evidence="2">
    <location>
        <position position="116"/>
    </location>
</feature>
<feature type="modified residue" description="N6-succinyllysine; alternate" evidence="3">
    <location>
        <position position="116"/>
    </location>
</feature>
<feature type="modified residue" description="N6-(pyridoxal phosphate)lysine" evidence="1">
    <location>
        <position position="280"/>
    </location>
</feature>
<sequence length="454" mass="51044">MLLAQRRLFSLGCRAKPIKTIYSSKVLGLSTSAKMALRFKNAKRIEGLDQNVWVEFTKLAADPSVVNLGQGFPDITLPSYVQEELSKAAFIDNLNQYTRGFGHPSLVKALSCLYGKIYQKQIDPNEEILVTVGGYGSLFNAIQGLVDPGDEVIIMVPFYDCYEPMVKMAGAVPVFIPLRSKRTDGMKWTSSDWTFNPQELESKFSSKTKAIILNTPHNPIGKVYTREELQVIADLCIKHDTLCISDEVYEWLVYTGHKHIKVASLPGMWDRTLTIGSAGKTFSVTGWKLGWSIGPGHLIKHLRTVQQTSVYTCATPLQAALAEAFWIDIKRMDDPECYFNSLPKELEVKRDRMACLLNSVGLKPIIPDGGYFIIADVSSLGVDLSDVKSDEPYDYKFVKWMTKNKKLSAIPVSAFCDSESKPHFEKLVRFCFIKKDSTLDAAEEIFRTWNSRKS</sequence>
<protein>
    <recommendedName>
        <fullName evidence="3">Kynurenine--oxoglutarate transaminase 3</fullName>
        <ecNumber evidence="3">2.6.1.7</ecNumber>
    </recommendedName>
    <alternativeName>
        <fullName evidence="3">Cysteine-S-conjugate beta-lyase 2</fullName>
        <ecNumber evidence="3">4.4.1.13</ecNumber>
    </alternativeName>
    <alternativeName>
        <fullName evidence="5">Kynurenine aminotransferase 3</fullName>
    </alternativeName>
    <alternativeName>
        <fullName>Kynurenine aminotransferase III</fullName>
        <shortName>KATIII</shortName>
    </alternativeName>
    <alternativeName>
        <fullName evidence="3">Kynurenine--glyoxylate transaminase</fullName>
        <ecNumber evidence="3">2.6.1.63</ecNumber>
    </alternativeName>
    <alternativeName>
        <fullName>Kynurenine--oxoglutarate transaminase III</fullName>
    </alternativeName>
</protein>
<dbReference type="EC" id="2.6.1.7" evidence="3"/>
<dbReference type="EC" id="4.4.1.13" evidence="3"/>
<dbReference type="EC" id="2.6.1.63" evidence="3"/>
<dbReference type="EMBL" id="AY955395">
    <property type="protein sequence ID" value="AAX55607.1"/>
    <property type="molecule type" value="mRNA"/>
</dbReference>
<dbReference type="RefSeq" id="NP_001015037.1">
    <property type="nucleotide sequence ID" value="NM_001015037.1"/>
</dbReference>
<dbReference type="SMR" id="Q58FK9"/>
<dbReference type="FunCoup" id="Q58FK9">
    <property type="interactions" value="1909"/>
</dbReference>
<dbReference type="STRING" id="10116.ENSRNOP00000059667"/>
<dbReference type="iPTMnet" id="Q58FK9"/>
<dbReference type="PhosphoSitePlus" id="Q58FK9"/>
<dbReference type="SwissPalm" id="Q58FK9"/>
<dbReference type="GeneID" id="541589"/>
<dbReference type="KEGG" id="rno:541589"/>
<dbReference type="AGR" id="RGD:1359262"/>
<dbReference type="CTD" id="56267"/>
<dbReference type="RGD" id="1359262">
    <property type="gene designation" value="Kyat3"/>
</dbReference>
<dbReference type="InParanoid" id="Q58FK9"/>
<dbReference type="PhylomeDB" id="Q58FK9"/>
<dbReference type="BRENDA" id="2.6.1.7">
    <property type="organism ID" value="5301"/>
</dbReference>
<dbReference type="UniPathway" id="UPA00334">
    <property type="reaction ID" value="UER00726"/>
</dbReference>
<dbReference type="PRO" id="PR:Q58FK9"/>
<dbReference type="Proteomes" id="UP000002494">
    <property type="component" value="Unplaced"/>
</dbReference>
<dbReference type="GO" id="GO:0005737">
    <property type="term" value="C:cytoplasm"/>
    <property type="evidence" value="ECO:0000318"/>
    <property type="project" value="GO_Central"/>
</dbReference>
<dbReference type="GO" id="GO:0005739">
    <property type="term" value="C:mitochondrion"/>
    <property type="evidence" value="ECO:0000318"/>
    <property type="project" value="GO_Central"/>
</dbReference>
<dbReference type="GO" id="GO:0047804">
    <property type="term" value="F:cysteine-S-conjugate beta-lyase activity"/>
    <property type="evidence" value="ECO:0007669"/>
    <property type="project" value="UniProtKB-EC"/>
</dbReference>
<dbReference type="GO" id="GO:0047315">
    <property type="term" value="F:kynurenine-glyoxylate transaminase activity"/>
    <property type="evidence" value="ECO:0000250"/>
    <property type="project" value="UniProtKB"/>
</dbReference>
<dbReference type="GO" id="GO:0016212">
    <property type="term" value="F:kynurenine-oxoglutarate transaminase activity"/>
    <property type="evidence" value="ECO:0000250"/>
    <property type="project" value="UniProtKB"/>
</dbReference>
<dbReference type="GO" id="GO:0042803">
    <property type="term" value="F:protein homodimerization activity"/>
    <property type="evidence" value="ECO:0000266"/>
    <property type="project" value="RGD"/>
</dbReference>
<dbReference type="GO" id="GO:0030170">
    <property type="term" value="F:pyridoxal phosphate binding"/>
    <property type="evidence" value="ECO:0007669"/>
    <property type="project" value="InterPro"/>
</dbReference>
<dbReference type="GO" id="GO:0006103">
    <property type="term" value="P:2-oxoglutarate metabolic process"/>
    <property type="evidence" value="ECO:0000266"/>
    <property type="project" value="RGD"/>
</dbReference>
<dbReference type="GO" id="GO:0006520">
    <property type="term" value="P:amino acid metabolic process"/>
    <property type="evidence" value="ECO:0000250"/>
    <property type="project" value="UniProtKB"/>
</dbReference>
<dbReference type="GO" id="GO:0009058">
    <property type="term" value="P:biosynthetic process"/>
    <property type="evidence" value="ECO:0007669"/>
    <property type="project" value="InterPro"/>
</dbReference>
<dbReference type="GO" id="GO:0070189">
    <property type="term" value="P:kynurenine metabolic process"/>
    <property type="evidence" value="ECO:0000250"/>
    <property type="project" value="UniProtKB"/>
</dbReference>
<dbReference type="GO" id="GO:0097053">
    <property type="term" value="P:L-kynurenine catabolic process"/>
    <property type="evidence" value="ECO:0007669"/>
    <property type="project" value="UniProtKB-UniPathway"/>
</dbReference>
<dbReference type="CDD" id="cd00609">
    <property type="entry name" value="AAT_like"/>
    <property type="match status" value="1"/>
</dbReference>
<dbReference type="FunFam" id="3.40.640.10:FF:000024">
    <property type="entry name" value="Kynurenine--oxoglutarate transaminase 3"/>
    <property type="match status" value="1"/>
</dbReference>
<dbReference type="FunFam" id="3.90.1150.10:FF:000021">
    <property type="entry name" value="Kynurenine--oxoglutarate transaminase 3"/>
    <property type="match status" value="1"/>
</dbReference>
<dbReference type="Gene3D" id="3.90.1150.10">
    <property type="entry name" value="Aspartate Aminotransferase, domain 1"/>
    <property type="match status" value="1"/>
</dbReference>
<dbReference type="Gene3D" id="3.40.640.10">
    <property type="entry name" value="Type I PLP-dependent aspartate aminotransferase-like (Major domain)"/>
    <property type="match status" value="1"/>
</dbReference>
<dbReference type="InterPro" id="IPR004839">
    <property type="entry name" value="Aminotransferase_I/II_large"/>
</dbReference>
<dbReference type="InterPro" id="IPR051326">
    <property type="entry name" value="Kynurenine-oxoglutarate_AT"/>
</dbReference>
<dbReference type="InterPro" id="IPR015424">
    <property type="entry name" value="PyrdxlP-dep_Trfase"/>
</dbReference>
<dbReference type="InterPro" id="IPR015421">
    <property type="entry name" value="PyrdxlP-dep_Trfase_major"/>
</dbReference>
<dbReference type="InterPro" id="IPR015422">
    <property type="entry name" value="PyrdxlP-dep_Trfase_small"/>
</dbReference>
<dbReference type="PANTHER" id="PTHR43807">
    <property type="entry name" value="FI04487P"/>
    <property type="match status" value="1"/>
</dbReference>
<dbReference type="PANTHER" id="PTHR43807:SF6">
    <property type="entry name" value="KYNURENINE--OXOGLUTARATE TRANSAMINASE 3"/>
    <property type="match status" value="1"/>
</dbReference>
<dbReference type="Pfam" id="PF00155">
    <property type="entry name" value="Aminotran_1_2"/>
    <property type="match status" value="1"/>
</dbReference>
<dbReference type="SUPFAM" id="SSF53383">
    <property type="entry name" value="PLP-dependent transferases"/>
    <property type="match status" value="1"/>
</dbReference>
<gene>
    <name evidence="5" type="primary">Kyat3</name>
    <name type="synonym">Ccbl2</name>
    <name type="synonym">Kat3</name>
</gene>
<keyword id="KW-0007">Acetylation</keyword>
<keyword id="KW-0032">Aminotransferase</keyword>
<keyword id="KW-0456">Lyase</keyword>
<keyword id="KW-0663">Pyridoxal phosphate</keyword>
<keyword id="KW-1185">Reference proteome</keyword>
<keyword id="KW-0808">Transferase</keyword>
<comment type="function">
    <text evidence="3">Catalyzes the irreversible transamination of the L-tryptophan metabolite L-kynurenine to form kynurenic acid (KA), an intermediate in the tryptophan catabolic pathway which is also a broad spectrum antagonist of the three ionotropic excitatory amino acid receptors among others. May catalyze the beta-elimination of S-conjugates and Se-conjugates of L-(seleno)cysteine, resulting in the cleavage of the C-S or C-Se bond. Has transaminase activity towards L-kynurenine, tryptophan, phenylalanine, serine, cysteine, methionine, histidine, glutamine and asparagine with glyoxylate as an amino group acceptor (in vitro). Has lower activity with 2-oxoglutarate as amino group acceptor (in vitro).</text>
</comment>
<comment type="catalytic activity">
    <reaction evidence="3">
        <text>L-kynurenine + 2-oxoglutarate = kynurenate + L-glutamate + H2O</text>
        <dbReference type="Rhea" id="RHEA:65560"/>
        <dbReference type="ChEBI" id="CHEBI:15377"/>
        <dbReference type="ChEBI" id="CHEBI:16810"/>
        <dbReference type="ChEBI" id="CHEBI:29985"/>
        <dbReference type="ChEBI" id="CHEBI:57959"/>
        <dbReference type="ChEBI" id="CHEBI:58454"/>
        <dbReference type="EC" id="2.6.1.7"/>
    </reaction>
    <physiologicalReaction direction="left-to-right" evidence="3">
        <dbReference type="Rhea" id="RHEA:65561"/>
    </physiologicalReaction>
</comment>
<comment type="catalytic activity">
    <reaction evidence="3">
        <text>L-kynurenine + glyoxylate = kynurenate + glycine + H2O</text>
        <dbReference type="Rhea" id="RHEA:65896"/>
        <dbReference type="ChEBI" id="CHEBI:15377"/>
        <dbReference type="ChEBI" id="CHEBI:36655"/>
        <dbReference type="ChEBI" id="CHEBI:57305"/>
        <dbReference type="ChEBI" id="CHEBI:57959"/>
        <dbReference type="ChEBI" id="CHEBI:58454"/>
        <dbReference type="EC" id="2.6.1.63"/>
    </reaction>
    <physiologicalReaction direction="left-to-right" evidence="3">
        <dbReference type="Rhea" id="RHEA:65897"/>
    </physiologicalReaction>
</comment>
<comment type="catalytic activity">
    <reaction evidence="3">
        <text>3-hydroxy-L-kynurenine + glyoxylate = xanthurenate + glycine + H2O</text>
        <dbReference type="Rhea" id="RHEA:65900"/>
        <dbReference type="ChEBI" id="CHEBI:15377"/>
        <dbReference type="ChEBI" id="CHEBI:36655"/>
        <dbReference type="ChEBI" id="CHEBI:57305"/>
        <dbReference type="ChEBI" id="CHEBI:58125"/>
        <dbReference type="ChEBI" id="CHEBI:71201"/>
        <dbReference type="EC" id="2.6.1.63"/>
    </reaction>
    <physiologicalReaction direction="left-to-right" evidence="3">
        <dbReference type="Rhea" id="RHEA:65901"/>
    </physiologicalReaction>
</comment>
<comment type="catalytic activity">
    <reaction evidence="3">
        <text>an S-substituted L-cysteine + H2O = a thiol + pyruvate + NH4(+)</text>
        <dbReference type="Rhea" id="RHEA:18121"/>
        <dbReference type="ChEBI" id="CHEBI:15361"/>
        <dbReference type="ChEBI" id="CHEBI:15377"/>
        <dbReference type="ChEBI" id="CHEBI:28938"/>
        <dbReference type="ChEBI" id="CHEBI:29256"/>
        <dbReference type="ChEBI" id="CHEBI:58717"/>
        <dbReference type="EC" id="4.4.1.13"/>
    </reaction>
    <physiologicalReaction direction="left-to-right" evidence="3">
        <dbReference type="Rhea" id="RHEA:18122"/>
    </physiologicalReaction>
</comment>
<comment type="cofactor">
    <cofactor evidence="3">
        <name>pyridoxal 5'-phosphate</name>
        <dbReference type="ChEBI" id="CHEBI:597326"/>
    </cofactor>
</comment>
<comment type="pathway">
    <text evidence="3">Amino-acid degradation; L-kynurenine degradation; kynurenate from L-kynurenine: step 1/2.</text>
</comment>
<comment type="subunit">
    <text evidence="3">Homodimer.</text>
</comment>
<comment type="similarity">
    <text evidence="4">Belongs to the class-I pyridoxal-phosphate-dependent aminotransferase family.</text>
</comment>
<proteinExistence type="evidence at transcript level"/>
<accession>Q58FK9</accession>
<evidence type="ECO:0000250" key="1">
    <source>
        <dbReference type="UniProtKB" id="Q16773"/>
    </source>
</evidence>
<evidence type="ECO:0000250" key="2">
    <source>
        <dbReference type="UniProtKB" id="Q6YP21"/>
    </source>
</evidence>
<evidence type="ECO:0000250" key="3">
    <source>
        <dbReference type="UniProtKB" id="Q71RI9"/>
    </source>
</evidence>
<evidence type="ECO:0000305" key="4"/>
<evidence type="ECO:0000312" key="5">
    <source>
        <dbReference type="RGD" id="1359262"/>
    </source>
</evidence>
<name>KAT3_RAT</name>